<organism>
    <name type="scientific">Bungarus candidus</name>
    <name type="common">Malayan krait</name>
    <dbReference type="NCBI Taxonomy" id="92438"/>
    <lineage>
        <taxon>Eukaryota</taxon>
        <taxon>Metazoa</taxon>
        <taxon>Chordata</taxon>
        <taxon>Craniata</taxon>
        <taxon>Vertebrata</taxon>
        <taxon>Euteleostomi</taxon>
        <taxon>Lepidosauria</taxon>
        <taxon>Squamata</taxon>
        <taxon>Bifurcata</taxon>
        <taxon>Unidentata</taxon>
        <taxon>Episquamata</taxon>
        <taxon>Toxicofera</taxon>
        <taxon>Serpentes</taxon>
        <taxon>Colubroidea</taxon>
        <taxon>Elapidae</taxon>
        <taxon>Bungarinae</taxon>
        <taxon>Bungarus</taxon>
    </lineage>
</organism>
<proteinExistence type="evidence at transcript level"/>
<name>PA2B1_BUNCA</name>
<sequence length="137" mass="15257">AVCVSLLGAANIPPHPLNLINFMEMIRYTIPCEKTWGEYADYGCYCGAGGSGRPIDALDRCCYVHDNCYGDAEKKHKCNPKTQSYSYKLTKRTIICYGAAGTCARIVCDCDRTAALCFGDSEYIERHKNIDTARFCQ</sequence>
<dbReference type="EC" id="3.1.1.4"/>
<dbReference type="EMBL" id="AY057880">
    <property type="protein sequence ID" value="AAL30062.1"/>
    <property type="molecule type" value="mRNA"/>
</dbReference>
<dbReference type="SMR" id="Q8AY48"/>
<dbReference type="GO" id="GO:0005576">
    <property type="term" value="C:extracellular region"/>
    <property type="evidence" value="ECO:0007669"/>
    <property type="project" value="UniProtKB-SubCell"/>
</dbReference>
<dbReference type="GO" id="GO:0005509">
    <property type="term" value="F:calcium ion binding"/>
    <property type="evidence" value="ECO:0007669"/>
    <property type="project" value="InterPro"/>
</dbReference>
<dbReference type="GO" id="GO:0047498">
    <property type="term" value="F:calcium-dependent phospholipase A2 activity"/>
    <property type="evidence" value="ECO:0007669"/>
    <property type="project" value="TreeGrafter"/>
</dbReference>
<dbReference type="GO" id="GO:0005543">
    <property type="term" value="F:phospholipid binding"/>
    <property type="evidence" value="ECO:0007669"/>
    <property type="project" value="TreeGrafter"/>
</dbReference>
<dbReference type="GO" id="GO:0090729">
    <property type="term" value="F:toxin activity"/>
    <property type="evidence" value="ECO:0007669"/>
    <property type="project" value="UniProtKB-KW"/>
</dbReference>
<dbReference type="GO" id="GO:0050482">
    <property type="term" value="P:arachidonate secretion"/>
    <property type="evidence" value="ECO:0007669"/>
    <property type="project" value="InterPro"/>
</dbReference>
<dbReference type="GO" id="GO:0016042">
    <property type="term" value="P:lipid catabolic process"/>
    <property type="evidence" value="ECO:0007669"/>
    <property type="project" value="UniProtKB-KW"/>
</dbReference>
<dbReference type="GO" id="GO:0006644">
    <property type="term" value="P:phospholipid metabolic process"/>
    <property type="evidence" value="ECO:0007669"/>
    <property type="project" value="InterPro"/>
</dbReference>
<dbReference type="CDD" id="cd00125">
    <property type="entry name" value="PLA2c"/>
    <property type="match status" value="1"/>
</dbReference>
<dbReference type="FunFam" id="1.20.90.10:FF:000007">
    <property type="entry name" value="Acidic phospholipase A2"/>
    <property type="match status" value="1"/>
</dbReference>
<dbReference type="Gene3D" id="1.20.90.10">
    <property type="entry name" value="Phospholipase A2 domain"/>
    <property type="match status" value="1"/>
</dbReference>
<dbReference type="InterPro" id="IPR001211">
    <property type="entry name" value="PLipase_A2"/>
</dbReference>
<dbReference type="InterPro" id="IPR033112">
    <property type="entry name" value="PLipase_A2_Asp_AS"/>
</dbReference>
<dbReference type="InterPro" id="IPR016090">
    <property type="entry name" value="PLipase_A2_dom"/>
</dbReference>
<dbReference type="InterPro" id="IPR036444">
    <property type="entry name" value="PLipase_A2_dom_sf"/>
</dbReference>
<dbReference type="InterPro" id="IPR033113">
    <property type="entry name" value="PLipase_A2_His_AS"/>
</dbReference>
<dbReference type="PANTHER" id="PTHR11716:SF100">
    <property type="entry name" value="PHOSPHOLIPASE A2"/>
    <property type="match status" value="1"/>
</dbReference>
<dbReference type="PANTHER" id="PTHR11716">
    <property type="entry name" value="PHOSPHOLIPASE A2 FAMILY MEMBER"/>
    <property type="match status" value="1"/>
</dbReference>
<dbReference type="Pfam" id="PF00068">
    <property type="entry name" value="Phospholip_A2_1"/>
    <property type="match status" value="1"/>
</dbReference>
<dbReference type="PRINTS" id="PR00389">
    <property type="entry name" value="PHPHLIPASEA2"/>
</dbReference>
<dbReference type="SMART" id="SM00085">
    <property type="entry name" value="PA2c"/>
    <property type="match status" value="1"/>
</dbReference>
<dbReference type="SUPFAM" id="SSF48619">
    <property type="entry name" value="Phospholipase A2, PLA2"/>
    <property type="match status" value="1"/>
</dbReference>
<dbReference type="PROSITE" id="PS00119">
    <property type="entry name" value="PA2_ASP"/>
    <property type="match status" value="1"/>
</dbReference>
<dbReference type="PROSITE" id="PS00118">
    <property type="entry name" value="PA2_HIS"/>
    <property type="match status" value="1"/>
</dbReference>
<accession>Q8AY48</accession>
<keyword id="KW-0106">Calcium</keyword>
<keyword id="KW-1015">Disulfide bond</keyword>
<keyword id="KW-0378">Hydrolase</keyword>
<keyword id="KW-0442">Lipid degradation</keyword>
<keyword id="KW-0443">Lipid metabolism</keyword>
<keyword id="KW-0479">Metal-binding</keyword>
<keyword id="KW-0528">Neurotoxin</keyword>
<keyword id="KW-0638">Presynaptic neurotoxin</keyword>
<keyword id="KW-0964">Secreted</keyword>
<keyword id="KW-0732">Signal</keyword>
<keyword id="KW-0800">Toxin</keyword>
<feature type="signal peptide" evidence="4">
    <location>
        <begin position="1" status="less than"/>
        <end position="9"/>
    </location>
</feature>
<feature type="propeptide" id="PRO_0000271447" evidence="2">
    <location>
        <begin position="10"/>
        <end position="17"/>
    </location>
</feature>
<feature type="chain" id="PRO_0000271448" description="Basic phospholipase A2 beta-bungarotoxin A1 chain" evidence="2">
    <location>
        <begin position="18"/>
        <end position="137"/>
    </location>
</feature>
<feature type="active site" evidence="3">
    <location>
        <position position="65"/>
    </location>
</feature>
<feature type="active site" evidence="3">
    <location>
        <position position="111"/>
    </location>
</feature>
<feature type="binding site" evidence="2">
    <location>
        <position position="45"/>
    </location>
    <ligand>
        <name>Ca(2+)</name>
        <dbReference type="ChEBI" id="CHEBI:29108"/>
    </ligand>
</feature>
<feature type="binding site" evidence="2">
    <location>
        <position position="47"/>
    </location>
    <ligand>
        <name>Ca(2+)</name>
        <dbReference type="ChEBI" id="CHEBI:29108"/>
    </ligand>
</feature>
<feature type="binding site" evidence="2">
    <location>
        <position position="49"/>
    </location>
    <ligand>
        <name>Ca(2+)</name>
        <dbReference type="ChEBI" id="CHEBI:29108"/>
    </ligand>
</feature>
<feature type="binding site" evidence="2">
    <location>
        <position position="66"/>
    </location>
    <ligand>
        <name>Ca(2+)</name>
        <dbReference type="ChEBI" id="CHEBI:29108"/>
    </ligand>
</feature>
<feature type="disulfide bond" description="Interchain (with a B chain)" evidence="2">
    <location>
        <position position="32"/>
    </location>
</feature>
<feature type="disulfide bond" evidence="2">
    <location>
        <begin position="44"/>
        <end position="136"/>
    </location>
</feature>
<feature type="disulfide bond" evidence="2">
    <location>
        <begin position="46"/>
        <end position="62"/>
    </location>
</feature>
<feature type="disulfide bond" evidence="2">
    <location>
        <begin position="61"/>
        <end position="117"/>
    </location>
</feature>
<feature type="disulfide bond" evidence="2">
    <location>
        <begin position="68"/>
        <end position="110"/>
    </location>
</feature>
<feature type="disulfide bond" evidence="2">
    <location>
        <begin position="78"/>
        <end position="103"/>
    </location>
</feature>
<feature type="disulfide bond" evidence="2">
    <location>
        <begin position="96"/>
        <end position="108"/>
    </location>
</feature>
<feature type="non-terminal residue" evidence="8">
    <location>
        <position position="1"/>
    </location>
</feature>
<reference key="1">
    <citation type="submission" date="2001-10" db="EMBL/GenBank/DDBJ databases">
        <title>Structural and functional genomics of Bungarus candidus.</title>
        <authorList>
            <person name="Tsai I.-H."/>
            <person name="Wang Y.-M."/>
            <person name="Hsu H.Y."/>
        </authorList>
    </citation>
    <scope>NUCLEOTIDE SEQUENCE [MRNA]</scope>
    <source>
        <tissue>Venom gland</tissue>
    </source>
</reference>
<evidence type="ECO:0000250" key="1"/>
<evidence type="ECO:0000250" key="2">
    <source>
        <dbReference type="UniProtKB" id="P00617"/>
    </source>
</evidence>
<evidence type="ECO:0000250" key="3">
    <source>
        <dbReference type="UniProtKB" id="P14418"/>
    </source>
</evidence>
<evidence type="ECO:0000255" key="4"/>
<evidence type="ECO:0000255" key="5">
    <source>
        <dbReference type="PROSITE-ProRule" id="PRU10035"/>
    </source>
</evidence>
<evidence type="ECO:0000255" key="6">
    <source>
        <dbReference type="PROSITE-ProRule" id="PRU10036"/>
    </source>
</evidence>
<evidence type="ECO:0000305" key="7"/>
<evidence type="ECO:0000305" key="8">
    <source ref="1"/>
</evidence>
<protein>
    <recommendedName>
        <fullName>Basic phospholipase A2 beta-bungarotoxin A1 chain</fullName>
        <shortName>Beta-BuTX A1 chain</shortName>
        <shortName>svPLA2</shortName>
        <ecNumber>3.1.1.4</ecNumber>
    </recommendedName>
    <alternativeName>
        <fullName>Phosphatidylcholine 2-acylhydrolase</fullName>
    </alternativeName>
</protein>
<comment type="function">
    <text evidence="1">Snake venom phospholipase A2 (PLA2) that shows presynaptic neurotoxicity. The A chain has phospholipase activity. PLA2 catalyzes the calcium-dependent hydrolysis of the 2-acyl groups in 3-sn-phosphoglycerides (By similarity).</text>
</comment>
<comment type="catalytic activity">
    <reaction evidence="5 6">
        <text>a 1,2-diacyl-sn-glycero-3-phosphocholine + H2O = a 1-acyl-sn-glycero-3-phosphocholine + a fatty acid + H(+)</text>
        <dbReference type="Rhea" id="RHEA:15801"/>
        <dbReference type="ChEBI" id="CHEBI:15377"/>
        <dbReference type="ChEBI" id="CHEBI:15378"/>
        <dbReference type="ChEBI" id="CHEBI:28868"/>
        <dbReference type="ChEBI" id="CHEBI:57643"/>
        <dbReference type="ChEBI" id="CHEBI:58168"/>
        <dbReference type="EC" id="3.1.1.4"/>
    </reaction>
</comment>
<comment type="cofactor">
    <cofactor evidence="2">
        <name>Ca(2+)</name>
        <dbReference type="ChEBI" id="CHEBI:29108"/>
    </cofactor>
    <text evidence="2">Binds 1 Ca(2+) ion.</text>
</comment>
<comment type="subunit">
    <text evidence="2">Heterodimer; disulfide-linked. The A chain has phospholipase A2 activity and the B chain shows homology with the basic protease inhibitors.</text>
</comment>
<comment type="subcellular location">
    <subcellularLocation>
        <location evidence="8">Secreted</location>
    </subcellularLocation>
</comment>
<comment type="tissue specificity">
    <text evidence="8">Expressed by the venom gland.</text>
</comment>
<comment type="similarity">
    <text evidence="7">Belongs to the phospholipase A2 family. Group I subfamily. D49 sub-subfamily.</text>
</comment>